<proteinExistence type="inferred from homology"/>
<protein>
    <recommendedName>
        <fullName evidence="1">RNA pyrophosphohydrolase</fullName>
        <ecNumber evidence="1">3.6.1.-</ecNumber>
    </recommendedName>
    <alternativeName>
        <fullName evidence="1">(Di)nucleoside polyphosphate hydrolase</fullName>
    </alternativeName>
</protein>
<keyword id="KW-0378">Hydrolase</keyword>
<keyword id="KW-1185">Reference proteome</keyword>
<dbReference type="EC" id="3.6.1.-" evidence="1"/>
<dbReference type="EMBL" id="CP000758">
    <property type="protein sequence ID" value="ABS13784.1"/>
    <property type="molecule type" value="Genomic_DNA"/>
</dbReference>
<dbReference type="RefSeq" id="WP_012091231.1">
    <property type="nucleotide sequence ID" value="NC_009667.1"/>
</dbReference>
<dbReference type="SMR" id="A6WXT0"/>
<dbReference type="STRING" id="439375.Oant_1064"/>
<dbReference type="KEGG" id="oan:Oant_1064"/>
<dbReference type="PATRIC" id="fig|439375.7.peg.1113"/>
<dbReference type="eggNOG" id="COG0494">
    <property type="taxonomic scope" value="Bacteria"/>
</dbReference>
<dbReference type="HOGENOM" id="CLU_087195_3_0_5"/>
<dbReference type="Proteomes" id="UP000002301">
    <property type="component" value="Chromosome 1"/>
</dbReference>
<dbReference type="GO" id="GO:0034432">
    <property type="term" value="F:bis(5'-adenosyl)-pentaphosphatase activity"/>
    <property type="evidence" value="ECO:0007669"/>
    <property type="project" value="TreeGrafter"/>
</dbReference>
<dbReference type="GO" id="GO:0008893">
    <property type="term" value="F:guanosine-3',5'-bis(diphosphate) 3'-diphosphatase activity"/>
    <property type="evidence" value="ECO:0007669"/>
    <property type="project" value="TreeGrafter"/>
</dbReference>
<dbReference type="GO" id="GO:0006753">
    <property type="term" value="P:nucleoside phosphate metabolic process"/>
    <property type="evidence" value="ECO:0007669"/>
    <property type="project" value="TreeGrafter"/>
</dbReference>
<dbReference type="GO" id="GO:0019693">
    <property type="term" value="P:ribose phosphate metabolic process"/>
    <property type="evidence" value="ECO:0007669"/>
    <property type="project" value="TreeGrafter"/>
</dbReference>
<dbReference type="CDD" id="cd03671">
    <property type="entry name" value="NUDIX_Ap4A_hydrolase_plant_like"/>
    <property type="match status" value="1"/>
</dbReference>
<dbReference type="Gene3D" id="3.90.79.10">
    <property type="entry name" value="Nucleoside Triphosphate Pyrophosphohydrolase"/>
    <property type="match status" value="1"/>
</dbReference>
<dbReference type="HAMAP" id="MF_00298">
    <property type="entry name" value="Nudix_RppH"/>
    <property type="match status" value="1"/>
</dbReference>
<dbReference type="InterPro" id="IPR020476">
    <property type="entry name" value="Nudix_hydrolase"/>
</dbReference>
<dbReference type="InterPro" id="IPR015797">
    <property type="entry name" value="NUDIX_hydrolase-like_dom_sf"/>
</dbReference>
<dbReference type="InterPro" id="IPR020084">
    <property type="entry name" value="NUDIX_hydrolase_CS"/>
</dbReference>
<dbReference type="InterPro" id="IPR000086">
    <property type="entry name" value="NUDIX_hydrolase_dom"/>
</dbReference>
<dbReference type="InterPro" id="IPR022927">
    <property type="entry name" value="RppH"/>
</dbReference>
<dbReference type="NCBIfam" id="NF001938">
    <property type="entry name" value="PRK00714.1-5"/>
    <property type="match status" value="1"/>
</dbReference>
<dbReference type="PANTHER" id="PTHR11839:SF22">
    <property type="entry name" value="NUDIX HYDROLASE 26, CHLOROPLASTIC"/>
    <property type="match status" value="1"/>
</dbReference>
<dbReference type="PANTHER" id="PTHR11839">
    <property type="entry name" value="UDP/ADP-SUGAR PYROPHOSPHATASE"/>
    <property type="match status" value="1"/>
</dbReference>
<dbReference type="Pfam" id="PF00293">
    <property type="entry name" value="NUDIX"/>
    <property type="match status" value="1"/>
</dbReference>
<dbReference type="PRINTS" id="PR00502">
    <property type="entry name" value="NUDIXFAMILY"/>
</dbReference>
<dbReference type="SUPFAM" id="SSF55811">
    <property type="entry name" value="Nudix"/>
    <property type="match status" value="1"/>
</dbReference>
<dbReference type="PROSITE" id="PS51462">
    <property type="entry name" value="NUDIX"/>
    <property type="match status" value="1"/>
</dbReference>
<dbReference type="PROSITE" id="PS00893">
    <property type="entry name" value="NUDIX_BOX"/>
    <property type="match status" value="1"/>
</dbReference>
<accession>A6WXT0</accession>
<organism>
    <name type="scientific">Brucella anthropi (strain ATCC 49188 / DSM 6882 / CCUG 24695 / JCM 21032 / LMG 3331 / NBRC 15819 / NCTC 12168 / Alc 37)</name>
    <name type="common">Ochrobactrum anthropi</name>
    <dbReference type="NCBI Taxonomy" id="439375"/>
    <lineage>
        <taxon>Bacteria</taxon>
        <taxon>Pseudomonadati</taxon>
        <taxon>Pseudomonadota</taxon>
        <taxon>Alphaproteobacteria</taxon>
        <taxon>Hyphomicrobiales</taxon>
        <taxon>Brucellaceae</taxon>
        <taxon>Brucella/Ochrobactrum group</taxon>
        <taxon>Brucella</taxon>
    </lineage>
</organism>
<comment type="function">
    <text evidence="1">Accelerates the degradation of transcripts by removing pyrophosphate from the 5'-end of triphosphorylated RNA, leading to a more labile monophosphorylated state that can stimulate subsequent ribonuclease cleavage.</text>
</comment>
<comment type="cofactor">
    <cofactor evidence="1">
        <name>a divalent metal cation</name>
        <dbReference type="ChEBI" id="CHEBI:60240"/>
    </cofactor>
</comment>
<comment type="similarity">
    <text evidence="1">Belongs to the Nudix hydrolase family. RppH subfamily.</text>
</comment>
<name>RPPH_BRUA4</name>
<feature type="chain" id="PRO_1000078968" description="RNA pyrophosphohydrolase">
    <location>
        <begin position="1"/>
        <end position="174"/>
    </location>
</feature>
<feature type="domain" description="Nudix hydrolase" evidence="1">
    <location>
        <begin position="14"/>
        <end position="167"/>
    </location>
</feature>
<feature type="short sequence motif" description="Nudix box">
    <location>
        <begin position="55"/>
        <end position="76"/>
    </location>
</feature>
<sequence>MSKHKGPVDPESLPYRPCVGLMVLNKAGLVWAGRRIVIPGDEMDGATQLWQMPQGGIDKGEEPLEAAIRELYEETGMKSVSLLEEASDWINYDLPPHLVGQALKGKYRGQTQKWFAYRFEGDESEIAINPPPGGHTAEFDRWEWKPMVKLPELIVPFKRKVYEEVVAAFRHLVA</sequence>
<evidence type="ECO:0000255" key="1">
    <source>
        <dbReference type="HAMAP-Rule" id="MF_00298"/>
    </source>
</evidence>
<gene>
    <name evidence="1" type="primary">rppH</name>
    <name evidence="1" type="synonym">nudH</name>
    <name type="ordered locus">Oant_1064</name>
</gene>
<reference key="1">
    <citation type="journal article" date="2011" name="J. Bacteriol.">
        <title>Genome of Ochrobactrum anthropi ATCC 49188 T, a versatile opportunistic pathogen and symbiont of several eukaryotic hosts.</title>
        <authorList>
            <person name="Chain P.S."/>
            <person name="Lang D.M."/>
            <person name="Comerci D.J."/>
            <person name="Malfatti S.A."/>
            <person name="Vergez L.M."/>
            <person name="Shin M."/>
            <person name="Ugalde R.A."/>
            <person name="Garcia E."/>
            <person name="Tolmasky M.E."/>
        </authorList>
    </citation>
    <scope>NUCLEOTIDE SEQUENCE [LARGE SCALE GENOMIC DNA]</scope>
    <source>
        <strain>ATCC 49188 / DSM 6882 / CCUG 24695 / JCM 21032 / LMG 3331 / NBRC 15819 / NCTC 12168 / Alc 37</strain>
    </source>
</reference>